<protein>
    <recommendedName>
        <fullName evidence="1">Phosphoglycerate kinase</fullName>
        <ecNumber evidence="1">2.7.2.3</ecNumber>
    </recommendedName>
</protein>
<organism>
    <name type="scientific">Borrelia hermsii (strain HS1 / DAH)</name>
    <dbReference type="NCBI Taxonomy" id="314723"/>
    <lineage>
        <taxon>Bacteria</taxon>
        <taxon>Pseudomonadati</taxon>
        <taxon>Spirochaetota</taxon>
        <taxon>Spirochaetia</taxon>
        <taxon>Spirochaetales</taxon>
        <taxon>Borreliaceae</taxon>
        <taxon>Borrelia</taxon>
    </lineage>
</organism>
<gene>
    <name evidence="1" type="primary">pgk</name>
    <name type="ordered locus">BH0056</name>
</gene>
<keyword id="KW-0067">ATP-binding</keyword>
<keyword id="KW-0963">Cytoplasm</keyword>
<keyword id="KW-0324">Glycolysis</keyword>
<keyword id="KW-0418">Kinase</keyword>
<keyword id="KW-0547">Nucleotide-binding</keyword>
<keyword id="KW-0808">Transferase</keyword>
<comment type="catalytic activity">
    <reaction evidence="1">
        <text>(2R)-3-phosphoglycerate + ATP = (2R)-3-phospho-glyceroyl phosphate + ADP</text>
        <dbReference type="Rhea" id="RHEA:14801"/>
        <dbReference type="ChEBI" id="CHEBI:30616"/>
        <dbReference type="ChEBI" id="CHEBI:57604"/>
        <dbReference type="ChEBI" id="CHEBI:58272"/>
        <dbReference type="ChEBI" id="CHEBI:456216"/>
        <dbReference type="EC" id="2.7.2.3"/>
    </reaction>
</comment>
<comment type="pathway">
    <text evidence="1">Carbohydrate degradation; glycolysis; pyruvate from D-glyceraldehyde 3-phosphate: step 2/5.</text>
</comment>
<comment type="subunit">
    <text evidence="1">Monomer.</text>
</comment>
<comment type="subcellular location">
    <subcellularLocation>
        <location evidence="1">Cytoplasm</location>
    </subcellularLocation>
</comment>
<comment type="similarity">
    <text evidence="1">Belongs to the phosphoglycerate kinase family.</text>
</comment>
<feature type="chain" id="PRO_1000192807" description="Phosphoglycerate kinase">
    <location>
        <begin position="1"/>
        <end position="392"/>
    </location>
</feature>
<feature type="binding site" evidence="1">
    <location>
        <begin position="21"/>
        <end position="23"/>
    </location>
    <ligand>
        <name>substrate</name>
    </ligand>
</feature>
<feature type="binding site" evidence="1">
    <location>
        <position position="36"/>
    </location>
    <ligand>
        <name>substrate</name>
    </ligand>
</feature>
<feature type="binding site" evidence="1">
    <location>
        <begin position="59"/>
        <end position="62"/>
    </location>
    <ligand>
        <name>substrate</name>
    </ligand>
</feature>
<feature type="binding site" evidence="1">
    <location>
        <position position="118"/>
    </location>
    <ligand>
        <name>substrate</name>
    </ligand>
</feature>
<feature type="binding site" evidence="1">
    <location>
        <position position="151"/>
    </location>
    <ligand>
        <name>substrate</name>
    </ligand>
</feature>
<feature type="binding site" evidence="1">
    <location>
        <position position="201"/>
    </location>
    <ligand>
        <name>ATP</name>
        <dbReference type="ChEBI" id="CHEBI:30616"/>
    </ligand>
</feature>
<feature type="binding site" evidence="1">
    <location>
        <position position="292"/>
    </location>
    <ligand>
        <name>ATP</name>
        <dbReference type="ChEBI" id="CHEBI:30616"/>
    </ligand>
</feature>
<feature type="binding site" evidence="1">
    <location>
        <position position="323"/>
    </location>
    <ligand>
        <name>ATP</name>
        <dbReference type="ChEBI" id="CHEBI:30616"/>
    </ligand>
</feature>
<feature type="binding site" evidence="1">
    <location>
        <begin position="349"/>
        <end position="352"/>
    </location>
    <ligand>
        <name>ATP</name>
        <dbReference type="ChEBI" id="CHEBI:30616"/>
    </ligand>
</feature>
<accession>B2S1P1</accession>
<sequence length="392" mass="42478">MSIKTIKDFDFSGKRALVRCDFNVPLREGNITDDTRIRAALPTIEYLKSQGARVVLMSHLGRPKGERNLKYSLMPVAKRLSELLGQDVKMLPDCIGDEVATAVSNMKNGDVVLLENIRFYRQEEENCNDFAKKLSQNGDIFVNDAFGTAHRAHASTAGLAAYLPAVGGFLMEKEDEFLGKILKNPESPFVSIIGGSKVSSKIAVLESLLPKSNVMVIGGGMAYTFLKVEGHSIGKSLLENEYIDVAASFLKKAKELDVKVILPLDHIVASEFKEDSIPEYVDAIDIPDGKIGMDIGEKTLRKIEEVLVSAKTVIWNGPLGVFEFDSFSKGTAKVAEYVASCSGITVVGGGDSVAAVNKFNLSEKITHVSTGGGASLEYLEGKILPGIKVLEK</sequence>
<proteinExistence type="inferred from homology"/>
<evidence type="ECO:0000255" key="1">
    <source>
        <dbReference type="HAMAP-Rule" id="MF_00145"/>
    </source>
</evidence>
<reference key="1">
    <citation type="submission" date="2004-12" db="EMBL/GenBank/DDBJ databases">
        <title>The genome sequence of Borrelia hermsii and Borrelia turicatae: comparative analysis of two agents of endemic N. America relapsing fever.</title>
        <authorList>
            <person name="Porcella S.F."/>
            <person name="Raffel S.J."/>
            <person name="Schrumpf M.E."/>
            <person name="Montgomery B."/>
            <person name="Smith T."/>
            <person name="Schwan T.G."/>
        </authorList>
    </citation>
    <scope>NUCLEOTIDE SEQUENCE [LARGE SCALE GENOMIC DNA]</scope>
    <source>
        <strain>HS1 / DAH</strain>
    </source>
</reference>
<dbReference type="EC" id="2.7.2.3" evidence="1"/>
<dbReference type="EMBL" id="CP000048">
    <property type="protein sequence ID" value="AAX16578.1"/>
    <property type="molecule type" value="Genomic_DNA"/>
</dbReference>
<dbReference type="RefSeq" id="WP_012421835.1">
    <property type="nucleotide sequence ID" value="NZ_CP073136.1"/>
</dbReference>
<dbReference type="SMR" id="B2S1P1"/>
<dbReference type="KEGG" id="bhr:BH0056"/>
<dbReference type="HOGENOM" id="CLU_025427_0_2_12"/>
<dbReference type="UniPathway" id="UPA00109">
    <property type="reaction ID" value="UER00185"/>
</dbReference>
<dbReference type="Proteomes" id="UP000008834">
    <property type="component" value="Chromosome"/>
</dbReference>
<dbReference type="GO" id="GO:0005829">
    <property type="term" value="C:cytosol"/>
    <property type="evidence" value="ECO:0007669"/>
    <property type="project" value="TreeGrafter"/>
</dbReference>
<dbReference type="GO" id="GO:0043531">
    <property type="term" value="F:ADP binding"/>
    <property type="evidence" value="ECO:0007669"/>
    <property type="project" value="TreeGrafter"/>
</dbReference>
<dbReference type="GO" id="GO:0005524">
    <property type="term" value="F:ATP binding"/>
    <property type="evidence" value="ECO:0007669"/>
    <property type="project" value="UniProtKB-KW"/>
</dbReference>
<dbReference type="GO" id="GO:0004618">
    <property type="term" value="F:phosphoglycerate kinase activity"/>
    <property type="evidence" value="ECO:0007669"/>
    <property type="project" value="UniProtKB-UniRule"/>
</dbReference>
<dbReference type="GO" id="GO:0006094">
    <property type="term" value="P:gluconeogenesis"/>
    <property type="evidence" value="ECO:0007669"/>
    <property type="project" value="TreeGrafter"/>
</dbReference>
<dbReference type="GO" id="GO:0006096">
    <property type="term" value="P:glycolytic process"/>
    <property type="evidence" value="ECO:0007669"/>
    <property type="project" value="UniProtKB-UniRule"/>
</dbReference>
<dbReference type="CDD" id="cd00318">
    <property type="entry name" value="Phosphoglycerate_kinase"/>
    <property type="match status" value="1"/>
</dbReference>
<dbReference type="FunFam" id="3.40.50.1260:FF:000003">
    <property type="entry name" value="Phosphoglycerate kinase"/>
    <property type="match status" value="1"/>
</dbReference>
<dbReference type="FunFam" id="3.40.50.1260:FF:000006">
    <property type="entry name" value="Phosphoglycerate kinase"/>
    <property type="match status" value="1"/>
</dbReference>
<dbReference type="Gene3D" id="3.40.50.1260">
    <property type="entry name" value="Phosphoglycerate kinase, N-terminal domain"/>
    <property type="match status" value="2"/>
</dbReference>
<dbReference type="HAMAP" id="MF_00145">
    <property type="entry name" value="Phosphoglyc_kinase"/>
    <property type="match status" value="1"/>
</dbReference>
<dbReference type="InterPro" id="IPR001576">
    <property type="entry name" value="Phosphoglycerate_kinase"/>
</dbReference>
<dbReference type="InterPro" id="IPR015824">
    <property type="entry name" value="Phosphoglycerate_kinase_N"/>
</dbReference>
<dbReference type="InterPro" id="IPR036043">
    <property type="entry name" value="Phosphoglycerate_kinase_sf"/>
</dbReference>
<dbReference type="PANTHER" id="PTHR11406">
    <property type="entry name" value="PHOSPHOGLYCERATE KINASE"/>
    <property type="match status" value="1"/>
</dbReference>
<dbReference type="PANTHER" id="PTHR11406:SF23">
    <property type="entry name" value="PHOSPHOGLYCERATE KINASE 1, CHLOROPLASTIC-RELATED"/>
    <property type="match status" value="1"/>
</dbReference>
<dbReference type="Pfam" id="PF00162">
    <property type="entry name" value="PGK"/>
    <property type="match status" value="1"/>
</dbReference>
<dbReference type="PIRSF" id="PIRSF000724">
    <property type="entry name" value="Pgk"/>
    <property type="match status" value="1"/>
</dbReference>
<dbReference type="PRINTS" id="PR00477">
    <property type="entry name" value="PHGLYCKINASE"/>
</dbReference>
<dbReference type="SUPFAM" id="SSF53748">
    <property type="entry name" value="Phosphoglycerate kinase"/>
    <property type="match status" value="1"/>
</dbReference>
<name>PGK_BORHD</name>